<reference key="1">
    <citation type="journal article" date="2006" name="Proc. Natl. Acad. Sci. U.S.A.">
        <title>Comparative genomics of the lactic acid bacteria.</title>
        <authorList>
            <person name="Makarova K.S."/>
            <person name="Slesarev A."/>
            <person name="Wolf Y.I."/>
            <person name="Sorokin A."/>
            <person name="Mirkin B."/>
            <person name="Koonin E.V."/>
            <person name="Pavlov A."/>
            <person name="Pavlova N."/>
            <person name="Karamychev V."/>
            <person name="Polouchine N."/>
            <person name="Shakhova V."/>
            <person name="Grigoriev I."/>
            <person name="Lou Y."/>
            <person name="Rohksar D."/>
            <person name="Lucas S."/>
            <person name="Huang K."/>
            <person name="Goodstein D.M."/>
            <person name="Hawkins T."/>
            <person name="Plengvidhya V."/>
            <person name="Welker D."/>
            <person name="Hughes J."/>
            <person name="Goh Y."/>
            <person name="Benson A."/>
            <person name="Baldwin K."/>
            <person name="Lee J.-H."/>
            <person name="Diaz-Muniz I."/>
            <person name="Dosti B."/>
            <person name="Smeianov V."/>
            <person name="Wechter W."/>
            <person name="Barabote R."/>
            <person name="Lorca G."/>
            <person name="Altermann E."/>
            <person name="Barrangou R."/>
            <person name="Ganesan B."/>
            <person name="Xie Y."/>
            <person name="Rawsthorne H."/>
            <person name="Tamir D."/>
            <person name="Parker C."/>
            <person name="Breidt F."/>
            <person name="Broadbent J.R."/>
            <person name="Hutkins R."/>
            <person name="O'Sullivan D."/>
            <person name="Steele J."/>
            <person name="Unlu G."/>
            <person name="Saier M.H. Jr."/>
            <person name="Klaenhammer T."/>
            <person name="Richardson P."/>
            <person name="Kozyavkin S."/>
            <person name="Weimer B.C."/>
            <person name="Mills D.A."/>
        </authorList>
    </citation>
    <scope>NUCLEOTIDE SEQUENCE [LARGE SCALE GENOMIC DNA]</scope>
    <source>
        <strain>ATCC 334 / BCRC 17002 / CCUG 31169 / CIP 107868 / KCTC 3260 / NRRL B-441</strain>
    </source>
</reference>
<feature type="chain" id="PRO_1000071487" description="Triosephosphate isomerase">
    <location>
        <begin position="1"/>
        <end position="251"/>
    </location>
</feature>
<feature type="active site" description="Electrophile" evidence="1">
    <location>
        <position position="95"/>
    </location>
</feature>
<feature type="active site" description="Proton acceptor" evidence="1">
    <location>
        <position position="167"/>
    </location>
</feature>
<feature type="binding site" evidence="1">
    <location>
        <begin position="9"/>
        <end position="11"/>
    </location>
    <ligand>
        <name>substrate</name>
    </ligand>
</feature>
<feature type="binding site" evidence="1">
    <location>
        <position position="173"/>
    </location>
    <ligand>
        <name>substrate</name>
    </ligand>
</feature>
<feature type="binding site" evidence="1">
    <location>
        <position position="213"/>
    </location>
    <ligand>
        <name>substrate</name>
    </ligand>
</feature>
<feature type="binding site" evidence="1">
    <location>
        <begin position="234"/>
        <end position="235"/>
    </location>
    <ligand>
        <name>substrate</name>
    </ligand>
</feature>
<organism>
    <name type="scientific">Lacticaseibacillus paracasei (strain ATCC 334 / BCRC 17002 / CCUG 31169 / CIP 107868 / KCTC 3260 / NRRL B-441)</name>
    <name type="common">Lactobacillus paracasei</name>
    <dbReference type="NCBI Taxonomy" id="321967"/>
    <lineage>
        <taxon>Bacteria</taxon>
        <taxon>Bacillati</taxon>
        <taxon>Bacillota</taxon>
        <taxon>Bacilli</taxon>
        <taxon>Lactobacillales</taxon>
        <taxon>Lactobacillaceae</taxon>
        <taxon>Lacticaseibacillus</taxon>
    </lineage>
</organism>
<name>TPIS_LACP3</name>
<comment type="function">
    <text evidence="1">Involved in the gluconeogenesis. Catalyzes stereospecifically the conversion of dihydroxyacetone phosphate (DHAP) to D-glyceraldehyde-3-phosphate (G3P).</text>
</comment>
<comment type="catalytic activity">
    <reaction evidence="1">
        <text>D-glyceraldehyde 3-phosphate = dihydroxyacetone phosphate</text>
        <dbReference type="Rhea" id="RHEA:18585"/>
        <dbReference type="ChEBI" id="CHEBI:57642"/>
        <dbReference type="ChEBI" id="CHEBI:59776"/>
        <dbReference type="EC" id="5.3.1.1"/>
    </reaction>
</comment>
<comment type="pathway">
    <text evidence="1">Carbohydrate biosynthesis; gluconeogenesis.</text>
</comment>
<comment type="pathway">
    <text evidence="1">Carbohydrate degradation; glycolysis; D-glyceraldehyde 3-phosphate from glycerone phosphate: step 1/1.</text>
</comment>
<comment type="subunit">
    <text evidence="1">Homodimer.</text>
</comment>
<comment type="subcellular location">
    <subcellularLocation>
        <location evidence="1">Cytoplasm</location>
    </subcellularLocation>
</comment>
<comment type="similarity">
    <text evidence="1">Belongs to the triosephosphate isomerase family.</text>
</comment>
<protein>
    <recommendedName>
        <fullName evidence="1">Triosephosphate isomerase</fullName>
        <shortName evidence="1">TIM</shortName>
        <shortName evidence="1">TPI</shortName>
        <ecNumber evidence="1">5.3.1.1</ecNumber>
    </recommendedName>
    <alternativeName>
        <fullName evidence="1">Triose-phosphate isomerase</fullName>
    </alternativeName>
</protein>
<sequence length="251" mass="26980">MRTPFIAGNWKMNKNPKETQEFLDGVKGKLPDASKVETVIGAPAIDLTTLVAGAEGTPLKTAAENCYFEDEGAFTGETSPKALKEMNVDYVIIGHSERRGYFHETDEDINKKAKAIFKNNLLPIICCGESLAQREAGQTEDWVASQIEAALAGLSADQVKVSVLAYEPIWAIGTGKTATADQAQEVVAHIRATVEKLYNKDTADAVRILYGGSVKPANVKELMAKPDIDGGLVGGASMDPESFIALANYQD</sequence>
<keyword id="KW-0963">Cytoplasm</keyword>
<keyword id="KW-0312">Gluconeogenesis</keyword>
<keyword id="KW-0324">Glycolysis</keyword>
<keyword id="KW-0413">Isomerase</keyword>
<keyword id="KW-1185">Reference proteome</keyword>
<evidence type="ECO:0000255" key="1">
    <source>
        <dbReference type="HAMAP-Rule" id="MF_00147"/>
    </source>
</evidence>
<proteinExistence type="inferred from homology"/>
<gene>
    <name evidence="1" type="primary">tpiA</name>
    <name type="ordered locus">LSEI_0969</name>
</gene>
<dbReference type="EC" id="5.3.1.1" evidence="1"/>
<dbReference type="EMBL" id="CP000423">
    <property type="protein sequence ID" value="ABJ69767.1"/>
    <property type="molecule type" value="Genomic_DNA"/>
</dbReference>
<dbReference type="RefSeq" id="WP_003564269.1">
    <property type="nucleotide sequence ID" value="NC_008526.1"/>
</dbReference>
<dbReference type="RefSeq" id="YP_806209.1">
    <property type="nucleotide sequence ID" value="NC_008526.1"/>
</dbReference>
<dbReference type="SMR" id="Q03AK5"/>
<dbReference type="STRING" id="321967.LSEI_0969"/>
<dbReference type="PaxDb" id="321967-LSEI_0969"/>
<dbReference type="GeneID" id="57089617"/>
<dbReference type="KEGG" id="lca:LSEI_0969"/>
<dbReference type="PATRIC" id="fig|321967.11.peg.939"/>
<dbReference type="HOGENOM" id="CLU_024251_2_3_9"/>
<dbReference type="UniPathway" id="UPA00109">
    <property type="reaction ID" value="UER00189"/>
</dbReference>
<dbReference type="UniPathway" id="UPA00138"/>
<dbReference type="Proteomes" id="UP000001651">
    <property type="component" value="Chromosome"/>
</dbReference>
<dbReference type="GO" id="GO:0005829">
    <property type="term" value="C:cytosol"/>
    <property type="evidence" value="ECO:0007669"/>
    <property type="project" value="TreeGrafter"/>
</dbReference>
<dbReference type="GO" id="GO:0004807">
    <property type="term" value="F:triose-phosphate isomerase activity"/>
    <property type="evidence" value="ECO:0007669"/>
    <property type="project" value="UniProtKB-UniRule"/>
</dbReference>
<dbReference type="GO" id="GO:0006094">
    <property type="term" value="P:gluconeogenesis"/>
    <property type="evidence" value="ECO:0007669"/>
    <property type="project" value="UniProtKB-UniRule"/>
</dbReference>
<dbReference type="GO" id="GO:0046166">
    <property type="term" value="P:glyceraldehyde-3-phosphate biosynthetic process"/>
    <property type="evidence" value="ECO:0007669"/>
    <property type="project" value="TreeGrafter"/>
</dbReference>
<dbReference type="GO" id="GO:0019563">
    <property type="term" value="P:glycerol catabolic process"/>
    <property type="evidence" value="ECO:0007669"/>
    <property type="project" value="TreeGrafter"/>
</dbReference>
<dbReference type="GO" id="GO:0006096">
    <property type="term" value="P:glycolytic process"/>
    <property type="evidence" value="ECO:0007669"/>
    <property type="project" value="UniProtKB-UniRule"/>
</dbReference>
<dbReference type="CDD" id="cd00311">
    <property type="entry name" value="TIM"/>
    <property type="match status" value="1"/>
</dbReference>
<dbReference type="FunFam" id="3.20.20.70:FF:000016">
    <property type="entry name" value="Triosephosphate isomerase"/>
    <property type="match status" value="1"/>
</dbReference>
<dbReference type="Gene3D" id="3.20.20.70">
    <property type="entry name" value="Aldolase class I"/>
    <property type="match status" value="1"/>
</dbReference>
<dbReference type="HAMAP" id="MF_00147_B">
    <property type="entry name" value="TIM_B"/>
    <property type="match status" value="1"/>
</dbReference>
<dbReference type="InterPro" id="IPR013785">
    <property type="entry name" value="Aldolase_TIM"/>
</dbReference>
<dbReference type="InterPro" id="IPR035990">
    <property type="entry name" value="TIM_sf"/>
</dbReference>
<dbReference type="InterPro" id="IPR022896">
    <property type="entry name" value="TrioseP_Isoase_bac/euk"/>
</dbReference>
<dbReference type="InterPro" id="IPR000652">
    <property type="entry name" value="Triosephosphate_isomerase"/>
</dbReference>
<dbReference type="InterPro" id="IPR020861">
    <property type="entry name" value="Triosephosphate_isomerase_AS"/>
</dbReference>
<dbReference type="NCBIfam" id="TIGR00419">
    <property type="entry name" value="tim"/>
    <property type="match status" value="1"/>
</dbReference>
<dbReference type="PANTHER" id="PTHR21139">
    <property type="entry name" value="TRIOSEPHOSPHATE ISOMERASE"/>
    <property type="match status" value="1"/>
</dbReference>
<dbReference type="PANTHER" id="PTHR21139:SF42">
    <property type="entry name" value="TRIOSEPHOSPHATE ISOMERASE"/>
    <property type="match status" value="1"/>
</dbReference>
<dbReference type="Pfam" id="PF00121">
    <property type="entry name" value="TIM"/>
    <property type="match status" value="1"/>
</dbReference>
<dbReference type="SUPFAM" id="SSF51351">
    <property type="entry name" value="Triosephosphate isomerase (TIM)"/>
    <property type="match status" value="1"/>
</dbReference>
<dbReference type="PROSITE" id="PS00171">
    <property type="entry name" value="TIM_1"/>
    <property type="match status" value="1"/>
</dbReference>
<dbReference type="PROSITE" id="PS51440">
    <property type="entry name" value="TIM_2"/>
    <property type="match status" value="1"/>
</dbReference>
<accession>Q03AK5</accession>